<accession>A8GP98</accession>
<dbReference type="EMBL" id="CP000847">
    <property type="protein sequence ID" value="ABV75223.1"/>
    <property type="molecule type" value="Genomic_DNA"/>
</dbReference>
<dbReference type="RefSeq" id="WP_012149853.1">
    <property type="nucleotide sequence ID" value="NC_009881.1"/>
</dbReference>
<dbReference type="SMR" id="A8GP98"/>
<dbReference type="STRING" id="293614.A1C_04825"/>
<dbReference type="KEGG" id="rak:A1C_04825"/>
<dbReference type="eggNOG" id="COG0828">
    <property type="taxonomic scope" value="Bacteria"/>
</dbReference>
<dbReference type="HOGENOM" id="CLU_159258_0_2_5"/>
<dbReference type="Proteomes" id="UP000006830">
    <property type="component" value="Chromosome"/>
</dbReference>
<dbReference type="GO" id="GO:1990904">
    <property type="term" value="C:ribonucleoprotein complex"/>
    <property type="evidence" value="ECO:0007669"/>
    <property type="project" value="UniProtKB-KW"/>
</dbReference>
<dbReference type="GO" id="GO:0005840">
    <property type="term" value="C:ribosome"/>
    <property type="evidence" value="ECO:0007669"/>
    <property type="project" value="UniProtKB-KW"/>
</dbReference>
<dbReference type="GO" id="GO:0003735">
    <property type="term" value="F:structural constituent of ribosome"/>
    <property type="evidence" value="ECO:0007669"/>
    <property type="project" value="InterPro"/>
</dbReference>
<dbReference type="GO" id="GO:0006412">
    <property type="term" value="P:translation"/>
    <property type="evidence" value="ECO:0007669"/>
    <property type="project" value="UniProtKB-UniRule"/>
</dbReference>
<dbReference type="Gene3D" id="1.20.5.1150">
    <property type="entry name" value="Ribosomal protein S8"/>
    <property type="match status" value="1"/>
</dbReference>
<dbReference type="HAMAP" id="MF_00358">
    <property type="entry name" value="Ribosomal_bS21"/>
    <property type="match status" value="1"/>
</dbReference>
<dbReference type="InterPro" id="IPR001911">
    <property type="entry name" value="Ribosomal_bS21"/>
</dbReference>
<dbReference type="InterPro" id="IPR038380">
    <property type="entry name" value="Ribosomal_bS21_sf"/>
</dbReference>
<dbReference type="NCBIfam" id="TIGR00030">
    <property type="entry name" value="S21p"/>
    <property type="match status" value="1"/>
</dbReference>
<dbReference type="Pfam" id="PF01165">
    <property type="entry name" value="Ribosomal_S21"/>
    <property type="match status" value="1"/>
</dbReference>
<protein>
    <recommendedName>
        <fullName evidence="1">Small ribosomal subunit protein bS21</fullName>
    </recommendedName>
    <alternativeName>
        <fullName evidence="2">30S ribosomal protein S21</fullName>
    </alternativeName>
</protein>
<gene>
    <name evidence="1" type="primary">rpsU</name>
    <name type="ordered locus">A1C_04825</name>
</gene>
<keyword id="KW-0687">Ribonucleoprotein</keyword>
<keyword id="KW-0689">Ribosomal protein</keyword>
<evidence type="ECO:0000255" key="1">
    <source>
        <dbReference type="HAMAP-Rule" id="MF_00358"/>
    </source>
</evidence>
<evidence type="ECO:0000305" key="2"/>
<comment type="similarity">
    <text evidence="1">Belongs to the bacterial ribosomal protein bS21 family.</text>
</comment>
<sequence>MILVNVHAGNCDNTLRNFKKKLQRELYFRKMKEQRYYETPSAKRVRKAQEAARRQRKFARKKMFDE</sequence>
<feature type="chain" id="PRO_1000005164" description="Small ribosomal subunit protein bS21">
    <location>
        <begin position="1"/>
        <end position="66"/>
    </location>
</feature>
<organism>
    <name type="scientific">Rickettsia akari (strain Hartford)</name>
    <dbReference type="NCBI Taxonomy" id="293614"/>
    <lineage>
        <taxon>Bacteria</taxon>
        <taxon>Pseudomonadati</taxon>
        <taxon>Pseudomonadota</taxon>
        <taxon>Alphaproteobacteria</taxon>
        <taxon>Rickettsiales</taxon>
        <taxon>Rickettsiaceae</taxon>
        <taxon>Rickettsieae</taxon>
        <taxon>Rickettsia</taxon>
        <taxon>spotted fever group</taxon>
    </lineage>
</organism>
<proteinExistence type="inferred from homology"/>
<reference key="1">
    <citation type="submission" date="2007-09" db="EMBL/GenBank/DDBJ databases">
        <title>Complete genome sequence of Rickettsia akari.</title>
        <authorList>
            <person name="Madan A."/>
            <person name="Fahey J."/>
            <person name="Helton E."/>
            <person name="Ketteman M."/>
            <person name="Madan A."/>
            <person name="Rodrigues S."/>
            <person name="Sanchez A."/>
            <person name="Whiting M."/>
            <person name="Dasch G."/>
            <person name="Eremeeva M."/>
        </authorList>
    </citation>
    <scope>NUCLEOTIDE SEQUENCE [LARGE SCALE GENOMIC DNA]</scope>
    <source>
        <strain>Hartford</strain>
    </source>
</reference>
<name>RS21_RICAH</name>